<proteinExistence type="predicted"/>
<reference key="1">
    <citation type="journal article" date="1997" name="Biochim. Biophys. Acta">
        <title>Isolation and nucleotide sequence of the gene encoding the XamI DNA methyltransferase of Xanthomonas campestris pv. amaranthicola.</title>
        <authorList>
            <person name="Gomez P."/>
            <person name="Ribas-Aparicio R.M."/>
            <person name="Pelaez A.I."/>
            <person name="Gomez A."/>
            <person name="Rodicio M.R."/>
        </authorList>
    </citation>
    <scope>NUCLEOTIDE SEQUENCE [GENOMIC DNA]</scope>
    <source>
        <strain>ATCC 11645 / LMG 498 / NCPPB 570</strain>
    </source>
</reference>
<reference key="2">
    <citation type="journal article" date="2003" name="Nucleic Acids Res.">
        <title>A nomenclature for restriction enzymes, DNA methyltransferases, homing endonucleases and their genes.</title>
        <authorList>
            <person name="Roberts R.J."/>
            <person name="Belfort M."/>
            <person name="Bestor T."/>
            <person name="Bhagwat A.S."/>
            <person name="Bickle T.A."/>
            <person name="Bitinaite J."/>
            <person name="Blumenthal R.M."/>
            <person name="Degtyarev S.K."/>
            <person name="Dryden D.T."/>
            <person name="Dybvig K."/>
            <person name="Firman K."/>
            <person name="Gromova E.S."/>
            <person name="Gumport R.I."/>
            <person name="Halford S.E."/>
            <person name="Hattman S."/>
            <person name="Heitman J."/>
            <person name="Hornby D.P."/>
            <person name="Janulaitis A."/>
            <person name="Jeltsch A."/>
            <person name="Josephsen J."/>
            <person name="Kiss A."/>
            <person name="Klaenhammer T.R."/>
            <person name="Kobayashi I."/>
            <person name="Kong H."/>
            <person name="Krueger D.H."/>
            <person name="Lacks S."/>
            <person name="Marinus M.G."/>
            <person name="Miyahara M."/>
            <person name="Morgan R.D."/>
            <person name="Murray N.E."/>
            <person name="Nagaraja V."/>
            <person name="Piekarowicz A."/>
            <person name="Pingoud A."/>
            <person name="Raleigh E."/>
            <person name="Rao D.N."/>
            <person name="Reich N."/>
            <person name="Repin V.E."/>
            <person name="Selker E.U."/>
            <person name="Shaw P.C."/>
            <person name="Stein D.C."/>
            <person name="Stoddard B.L."/>
            <person name="Szybalski W."/>
            <person name="Trautner T.A."/>
            <person name="Van Etten J.L."/>
            <person name="Vitor J.M."/>
            <person name="Wilson G.G."/>
            <person name="Xu S.Y."/>
        </authorList>
    </citation>
    <scope>NOMENCLATURE</scope>
    <scope>SUBTYPE</scope>
</reference>
<gene>
    <name type="primary">xamIR</name>
</gene>
<comment type="function">
    <text evidence="1">A P subtype restriction enzyme that recognizes the double-stranded sequence 5'-GTCGAC-3' and cleaves after G-1.</text>
</comment>
<comment type="catalytic activity">
    <reaction>
        <text>Endonucleolytic cleavage of DNA to give specific double-stranded fragments with terminal 5'-phosphates.</text>
        <dbReference type="EC" id="3.1.21.4"/>
    </reaction>
</comment>
<feature type="chain" id="PRO_0000077373" description="Type II restriction enzyme XamI">
    <location>
        <begin position="1"/>
        <end position="274"/>
    </location>
</feature>
<dbReference type="EC" id="3.1.21.4"/>
<dbReference type="EMBL" id="U77781">
    <property type="protein sequence ID" value="AAD13687.1"/>
    <property type="molecule type" value="Genomic_DNA"/>
</dbReference>
<dbReference type="SMR" id="P96189"/>
<dbReference type="REBASE" id="2125">
    <property type="entry name" value="XamI"/>
</dbReference>
<dbReference type="PRO" id="PR:P96189"/>
<dbReference type="GO" id="GO:0003677">
    <property type="term" value="F:DNA binding"/>
    <property type="evidence" value="ECO:0007669"/>
    <property type="project" value="InterPro"/>
</dbReference>
<dbReference type="GO" id="GO:0009036">
    <property type="term" value="F:type II site-specific deoxyribonuclease activity"/>
    <property type="evidence" value="ECO:0007669"/>
    <property type="project" value="UniProtKB-EC"/>
</dbReference>
<dbReference type="GO" id="GO:0009307">
    <property type="term" value="P:DNA restriction-modification system"/>
    <property type="evidence" value="ECO:0007669"/>
    <property type="project" value="UniProtKB-KW"/>
</dbReference>
<dbReference type="InterPro" id="IPR019072">
    <property type="entry name" value="Restrct_endonuc_II_XamI"/>
</dbReference>
<dbReference type="Pfam" id="PF09572">
    <property type="entry name" value="RE_XamI"/>
    <property type="match status" value="1"/>
</dbReference>
<accession>P96189</accession>
<evidence type="ECO:0000303" key="1">
    <source>
    </source>
</evidence>
<name>T2X1_XANCR</name>
<sequence>MTSAPPRWTTAELAEDAATSAAQFRTERLAVTDSWGTHYNQARGKFELLFKKLSDLNPEAITDDNLAEAYGLGLGEALRYLAGPPISDDDLQVIADVESIAPGVLKKNAEALRKVFGVIERVIDPHRFPWMETGGMPTEQQREAALLASSVLLAAQRIATERRNEGKDNQETMVKDYLRTLGFTEAPAAAINTIVKGPQAMQFCAECQLGERKADVVVRLHDTRLMAIECKVSNSSTNSVKRLNNDAAVKAEYWIKQFGTAQVVPSRSLVSSRY</sequence>
<keyword id="KW-0255">Endonuclease</keyword>
<keyword id="KW-0378">Hydrolase</keyword>
<keyword id="KW-0540">Nuclease</keyword>
<keyword id="KW-0680">Restriction system</keyword>
<organism>
    <name type="scientific">Xanthomonas campestris pv. amaranthicola</name>
    <dbReference type="NCBI Taxonomy" id="54735"/>
    <lineage>
        <taxon>Bacteria</taxon>
        <taxon>Pseudomonadati</taxon>
        <taxon>Pseudomonadota</taxon>
        <taxon>Gammaproteobacteria</taxon>
        <taxon>Lysobacterales</taxon>
        <taxon>Lysobacteraceae</taxon>
        <taxon>Xanthomonas</taxon>
    </lineage>
</organism>
<protein>
    <recommendedName>
        <fullName evidence="1">Type II restriction enzyme XamI</fullName>
        <shortName>R.XamI</shortName>
        <ecNumber>3.1.21.4</ecNumber>
    </recommendedName>
    <alternativeName>
        <fullName>Endonuclease XamI</fullName>
    </alternativeName>
    <alternativeName>
        <fullName>Type-2 restriction enzyme XamI</fullName>
    </alternativeName>
</protein>